<protein>
    <recommendedName>
        <fullName evidence="1">Uracil phosphoribosyltransferase</fullName>
        <ecNumber evidence="1">2.4.2.9</ecNumber>
    </recommendedName>
    <alternativeName>
        <fullName evidence="1">UMP pyrophosphorylase</fullName>
    </alternativeName>
    <alternativeName>
        <fullName evidence="1">UPRTase</fullName>
    </alternativeName>
</protein>
<name>UPP_DICT6</name>
<dbReference type="EC" id="2.4.2.9" evidence="1"/>
<dbReference type="EMBL" id="CP001146">
    <property type="protein sequence ID" value="ACI18965.1"/>
    <property type="molecule type" value="Genomic_DNA"/>
</dbReference>
<dbReference type="RefSeq" id="WP_012547597.1">
    <property type="nucleotide sequence ID" value="NC_011297.1"/>
</dbReference>
<dbReference type="SMR" id="B5YDB8"/>
<dbReference type="STRING" id="309799.DICTH_0653"/>
<dbReference type="PaxDb" id="309799-DICTH_0653"/>
<dbReference type="KEGG" id="dth:DICTH_0653"/>
<dbReference type="eggNOG" id="COG0035">
    <property type="taxonomic scope" value="Bacteria"/>
</dbReference>
<dbReference type="HOGENOM" id="CLU_067096_2_2_0"/>
<dbReference type="OrthoDB" id="9781675at2"/>
<dbReference type="UniPathway" id="UPA00574">
    <property type="reaction ID" value="UER00636"/>
</dbReference>
<dbReference type="Proteomes" id="UP000001733">
    <property type="component" value="Chromosome"/>
</dbReference>
<dbReference type="GO" id="GO:0005525">
    <property type="term" value="F:GTP binding"/>
    <property type="evidence" value="ECO:0007669"/>
    <property type="project" value="UniProtKB-KW"/>
</dbReference>
<dbReference type="GO" id="GO:0000287">
    <property type="term" value="F:magnesium ion binding"/>
    <property type="evidence" value="ECO:0007669"/>
    <property type="project" value="UniProtKB-UniRule"/>
</dbReference>
<dbReference type="GO" id="GO:0004845">
    <property type="term" value="F:uracil phosphoribosyltransferase activity"/>
    <property type="evidence" value="ECO:0007669"/>
    <property type="project" value="UniProtKB-UniRule"/>
</dbReference>
<dbReference type="GO" id="GO:0044206">
    <property type="term" value="P:UMP salvage"/>
    <property type="evidence" value="ECO:0007669"/>
    <property type="project" value="UniProtKB-UniRule"/>
</dbReference>
<dbReference type="GO" id="GO:0006223">
    <property type="term" value="P:uracil salvage"/>
    <property type="evidence" value="ECO:0007669"/>
    <property type="project" value="InterPro"/>
</dbReference>
<dbReference type="CDD" id="cd06223">
    <property type="entry name" value="PRTases_typeI"/>
    <property type="match status" value="1"/>
</dbReference>
<dbReference type="FunFam" id="3.40.50.2020:FF:000003">
    <property type="entry name" value="Uracil phosphoribosyltransferase"/>
    <property type="match status" value="1"/>
</dbReference>
<dbReference type="Gene3D" id="3.40.50.2020">
    <property type="match status" value="1"/>
</dbReference>
<dbReference type="HAMAP" id="MF_01218_B">
    <property type="entry name" value="Upp_B"/>
    <property type="match status" value="1"/>
</dbReference>
<dbReference type="InterPro" id="IPR000836">
    <property type="entry name" value="PRibTrfase_dom"/>
</dbReference>
<dbReference type="InterPro" id="IPR029057">
    <property type="entry name" value="PRTase-like"/>
</dbReference>
<dbReference type="InterPro" id="IPR034332">
    <property type="entry name" value="Upp_B"/>
</dbReference>
<dbReference type="InterPro" id="IPR050054">
    <property type="entry name" value="UPRTase/APRTase"/>
</dbReference>
<dbReference type="InterPro" id="IPR005765">
    <property type="entry name" value="Ura_phspho_trans"/>
</dbReference>
<dbReference type="NCBIfam" id="NF001097">
    <property type="entry name" value="PRK00129.1"/>
    <property type="match status" value="1"/>
</dbReference>
<dbReference type="NCBIfam" id="TIGR01091">
    <property type="entry name" value="upp"/>
    <property type="match status" value="1"/>
</dbReference>
<dbReference type="PANTHER" id="PTHR32315">
    <property type="entry name" value="ADENINE PHOSPHORIBOSYLTRANSFERASE"/>
    <property type="match status" value="1"/>
</dbReference>
<dbReference type="PANTHER" id="PTHR32315:SF4">
    <property type="entry name" value="URACIL PHOSPHORIBOSYLTRANSFERASE, CHLOROPLASTIC"/>
    <property type="match status" value="1"/>
</dbReference>
<dbReference type="Pfam" id="PF14681">
    <property type="entry name" value="UPRTase"/>
    <property type="match status" value="1"/>
</dbReference>
<dbReference type="SUPFAM" id="SSF53271">
    <property type="entry name" value="PRTase-like"/>
    <property type="match status" value="1"/>
</dbReference>
<accession>B5YDB8</accession>
<feature type="chain" id="PRO_1000139115" description="Uracil phosphoribosyltransferase">
    <location>
        <begin position="1"/>
        <end position="207"/>
    </location>
</feature>
<feature type="binding site" evidence="1">
    <location>
        <position position="77"/>
    </location>
    <ligand>
        <name>5-phospho-alpha-D-ribose 1-diphosphate</name>
        <dbReference type="ChEBI" id="CHEBI:58017"/>
    </ligand>
</feature>
<feature type="binding site" evidence="1">
    <location>
        <position position="102"/>
    </location>
    <ligand>
        <name>5-phospho-alpha-D-ribose 1-diphosphate</name>
        <dbReference type="ChEBI" id="CHEBI:58017"/>
    </ligand>
</feature>
<feature type="binding site" evidence="1">
    <location>
        <begin position="129"/>
        <end position="137"/>
    </location>
    <ligand>
        <name>5-phospho-alpha-D-ribose 1-diphosphate</name>
        <dbReference type="ChEBI" id="CHEBI:58017"/>
    </ligand>
</feature>
<feature type="binding site" evidence="1">
    <location>
        <position position="192"/>
    </location>
    <ligand>
        <name>uracil</name>
        <dbReference type="ChEBI" id="CHEBI:17568"/>
    </ligand>
</feature>
<feature type="binding site" evidence="1">
    <location>
        <begin position="197"/>
        <end position="199"/>
    </location>
    <ligand>
        <name>uracil</name>
        <dbReference type="ChEBI" id="CHEBI:17568"/>
    </ligand>
</feature>
<feature type="binding site" evidence="1">
    <location>
        <position position="198"/>
    </location>
    <ligand>
        <name>5-phospho-alpha-D-ribose 1-diphosphate</name>
        <dbReference type="ChEBI" id="CHEBI:58017"/>
    </ligand>
</feature>
<sequence length="207" mass="22704">MVIVVDHPLVQHKLTKLRDKNTGPKEFRELLFEISSLMLYEVTKNLPTKEVEVETPLGIAKGKVLDNKDLAIVPILRAGLVMADGMLQILPSAKVGHIGLYRDPETLKPVQYYTKLPEDIDKREVIVVDPMLATGGSAVAAISILKAKGVKDIKFVCIISAPEGIETLRNSHPDVDIYTAAIDERLNDHGYIIPGLGDAGDRLFGTK</sequence>
<proteinExistence type="inferred from homology"/>
<keyword id="KW-0021">Allosteric enzyme</keyword>
<keyword id="KW-0328">Glycosyltransferase</keyword>
<keyword id="KW-0342">GTP-binding</keyword>
<keyword id="KW-0460">Magnesium</keyword>
<keyword id="KW-0547">Nucleotide-binding</keyword>
<keyword id="KW-0808">Transferase</keyword>
<comment type="function">
    <text evidence="1">Catalyzes the conversion of uracil and 5-phospho-alpha-D-ribose 1-diphosphate (PRPP) to UMP and diphosphate.</text>
</comment>
<comment type="catalytic activity">
    <reaction evidence="1">
        <text>UMP + diphosphate = 5-phospho-alpha-D-ribose 1-diphosphate + uracil</text>
        <dbReference type="Rhea" id="RHEA:13017"/>
        <dbReference type="ChEBI" id="CHEBI:17568"/>
        <dbReference type="ChEBI" id="CHEBI:33019"/>
        <dbReference type="ChEBI" id="CHEBI:57865"/>
        <dbReference type="ChEBI" id="CHEBI:58017"/>
        <dbReference type="EC" id="2.4.2.9"/>
    </reaction>
</comment>
<comment type="cofactor">
    <cofactor evidence="1">
        <name>Mg(2+)</name>
        <dbReference type="ChEBI" id="CHEBI:18420"/>
    </cofactor>
    <text evidence="1">Binds 1 Mg(2+) ion per subunit. The magnesium is bound as Mg-PRPP.</text>
</comment>
<comment type="activity regulation">
    <text evidence="1">Allosterically activated by GTP.</text>
</comment>
<comment type="pathway">
    <text evidence="1">Pyrimidine metabolism; UMP biosynthesis via salvage pathway; UMP from uracil: step 1/1.</text>
</comment>
<comment type="similarity">
    <text evidence="1">Belongs to the UPRTase family.</text>
</comment>
<organism>
    <name type="scientific">Dictyoglomus thermophilum (strain ATCC 35947 / DSM 3960 / H-6-12)</name>
    <dbReference type="NCBI Taxonomy" id="309799"/>
    <lineage>
        <taxon>Bacteria</taxon>
        <taxon>Pseudomonadati</taxon>
        <taxon>Dictyoglomota</taxon>
        <taxon>Dictyoglomia</taxon>
        <taxon>Dictyoglomales</taxon>
        <taxon>Dictyoglomaceae</taxon>
        <taxon>Dictyoglomus</taxon>
    </lineage>
</organism>
<reference key="1">
    <citation type="journal article" date="2014" name="Genome Announc.">
        <title>Complete Genome Sequence of the Extreme Thermophile Dictyoglomus thermophilum H-6-12.</title>
        <authorList>
            <person name="Coil D.A."/>
            <person name="Badger J.H."/>
            <person name="Forberger H.C."/>
            <person name="Riggs F."/>
            <person name="Madupu R."/>
            <person name="Fedorova N."/>
            <person name="Ward N."/>
            <person name="Robb F.T."/>
            <person name="Eisen J.A."/>
        </authorList>
    </citation>
    <scope>NUCLEOTIDE SEQUENCE [LARGE SCALE GENOMIC DNA]</scope>
    <source>
        <strain>ATCC 35947 / DSM 3960 / H-6-12</strain>
    </source>
</reference>
<evidence type="ECO:0000255" key="1">
    <source>
        <dbReference type="HAMAP-Rule" id="MF_01218"/>
    </source>
</evidence>
<gene>
    <name evidence="1" type="primary">upp</name>
    <name type="ordered locus">DICTH_0653</name>
</gene>